<proteinExistence type="inferred from homology"/>
<reference key="1">
    <citation type="journal article" date="2009" name="PLoS Genet.">
        <title>Organised genome dynamics in the Escherichia coli species results in highly diverse adaptive paths.</title>
        <authorList>
            <person name="Touchon M."/>
            <person name="Hoede C."/>
            <person name="Tenaillon O."/>
            <person name="Barbe V."/>
            <person name="Baeriswyl S."/>
            <person name="Bidet P."/>
            <person name="Bingen E."/>
            <person name="Bonacorsi S."/>
            <person name="Bouchier C."/>
            <person name="Bouvet O."/>
            <person name="Calteau A."/>
            <person name="Chiapello H."/>
            <person name="Clermont O."/>
            <person name="Cruveiller S."/>
            <person name="Danchin A."/>
            <person name="Diard M."/>
            <person name="Dossat C."/>
            <person name="Karoui M.E."/>
            <person name="Frapy E."/>
            <person name="Garry L."/>
            <person name="Ghigo J.M."/>
            <person name="Gilles A.M."/>
            <person name="Johnson J."/>
            <person name="Le Bouguenec C."/>
            <person name="Lescat M."/>
            <person name="Mangenot S."/>
            <person name="Martinez-Jehanne V."/>
            <person name="Matic I."/>
            <person name="Nassif X."/>
            <person name="Oztas S."/>
            <person name="Petit M.A."/>
            <person name="Pichon C."/>
            <person name="Rouy Z."/>
            <person name="Ruf C.S."/>
            <person name="Schneider D."/>
            <person name="Tourret J."/>
            <person name="Vacherie B."/>
            <person name="Vallenet D."/>
            <person name="Medigue C."/>
            <person name="Rocha E.P.C."/>
            <person name="Denamur E."/>
        </authorList>
    </citation>
    <scope>NUCLEOTIDE SEQUENCE [LARGE SCALE GENOMIC DNA]</scope>
    <source>
        <strain>UMN026 / ExPEC</strain>
    </source>
</reference>
<organism>
    <name type="scientific">Escherichia coli O17:K52:H18 (strain UMN026 / ExPEC)</name>
    <dbReference type="NCBI Taxonomy" id="585056"/>
    <lineage>
        <taxon>Bacteria</taxon>
        <taxon>Pseudomonadati</taxon>
        <taxon>Pseudomonadota</taxon>
        <taxon>Gammaproteobacteria</taxon>
        <taxon>Enterobacterales</taxon>
        <taxon>Enterobacteriaceae</taxon>
        <taxon>Escherichia</taxon>
    </lineage>
</organism>
<keyword id="KW-0413">Isomerase</keyword>
<sequence>MTQDELKKAVGWAALQYVQPGTIVGVGTGSTAAHFIDALGTMKGQIEGAVSSSDASTEKLKSLGIHVFDLNEVDSLGIYVDGADEINGHMQMIKGGGAALTREKIIASVAEKFICIADASKQVDILGKFPLPVEVIPMARSAVARQLVKLGGRPEYRQGVVTDNGNVILDVHGMEILDPIAMENAINAIPGVVTVGLFANRGADVALIGTPDGVKTIVK</sequence>
<gene>
    <name evidence="1" type="primary">rpiA</name>
    <name type="ordered locus">ECUMN_3255</name>
</gene>
<dbReference type="EC" id="5.3.1.6" evidence="1"/>
<dbReference type="EMBL" id="CU928163">
    <property type="protein sequence ID" value="CAR14418.1"/>
    <property type="molecule type" value="Genomic_DNA"/>
</dbReference>
<dbReference type="RefSeq" id="WP_000189743.1">
    <property type="nucleotide sequence ID" value="NC_011751.1"/>
</dbReference>
<dbReference type="RefSeq" id="YP_002413937.1">
    <property type="nucleotide sequence ID" value="NC_011751.1"/>
</dbReference>
<dbReference type="SMR" id="B7N7F6"/>
<dbReference type="STRING" id="585056.ECUMN_3255"/>
<dbReference type="GeneID" id="93779085"/>
<dbReference type="KEGG" id="eum:ECUMN_3255"/>
<dbReference type="PATRIC" id="fig|585056.7.peg.3433"/>
<dbReference type="HOGENOM" id="CLU_056590_1_1_6"/>
<dbReference type="UniPathway" id="UPA00115">
    <property type="reaction ID" value="UER00412"/>
</dbReference>
<dbReference type="Proteomes" id="UP000007097">
    <property type="component" value="Chromosome"/>
</dbReference>
<dbReference type="GO" id="GO:0005829">
    <property type="term" value="C:cytosol"/>
    <property type="evidence" value="ECO:0007669"/>
    <property type="project" value="TreeGrafter"/>
</dbReference>
<dbReference type="GO" id="GO:0004751">
    <property type="term" value="F:ribose-5-phosphate isomerase activity"/>
    <property type="evidence" value="ECO:0007669"/>
    <property type="project" value="UniProtKB-UniRule"/>
</dbReference>
<dbReference type="GO" id="GO:0006014">
    <property type="term" value="P:D-ribose metabolic process"/>
    <property type="evidence" value="ECO:0007669"/>
    <property type="project" value="TreeGrafter"/>
</dbReference>
<dbReference type="GO" id="GO:0009052">
    <property type="term" value="P:pentose-phosphate shunt, non-oxidative branch"/>
    <property type="evidence" value="ECO:0007669"/>
    <property type="project" value="UniProtKB-UniRule"/>
</dbReference>
<dbReference type="CDD" id="cd01398">
    <property type="entry name" value="RPI_A"/>
    <property type="match status" value="1"/>
</dbReference>
<dbReference type="FunFam" id="3.30.70.260:FF:000004">
    <property type="entry name" value="Ribose-5-phosphate isomerase A"/>
    <property type="match status" value="1"/>
</dbReference>
<dbReference type="FunFam" id="3.40.50.1360:FF:000001">
    <property type="entry name" value="Ribose-5-phosphate isomerase A"/>
    <property type="match status" value="1"/>
</dbReference>
<dbReference type="Gene3D" id="3.30.70.260">
    <property type="match status" value="1"/>
</dbReference>
<dbReference type="Gene3D" id="3.40.50.1360">
    <property type="match status" value="1"/>
</dbReference>
<dbReference type="HAMAP" id="MF_00170">
    <property type="entry name" value="Rib_5P_isom_A"/>
    <property type="match status" value="1"/>
</dbReference>
<dbReference type="InterPro" id="IPR037171">
    <property type="entry name" value="NagB/RpiA_transferase-like"/>
</dbReference>
<dbReference type="InterPro" id="IPR020672">
    <property type="entry name" value="Ribose5P_isomerase_typA_subgr"/>
</dbReference>
<dbReference type="InterPro" id="IPR004788">
    <property type="entry name" value="Ribose5P_isomerase_type_A"/>
</dbReference>
<dbReference type="NCBIfam" id="NF001924">
    <property type="entry name" value="PRK00702.1"/>
    <property type="match status" value="1"/>
</dbReference>
<dbReference type="NCBIfam" id="TIGR00021">
    <property type="entry name" value="rpiA"/>
    <property type="match status" value="1"/>
</dbReference>
<dbReference type="PANTHER" id="PTHR11934">
    <property type="entry name" value="RIBOSE-5-PHOSPHATE ISOMERASE"/>
    <property type="match status" value="1"/>
</dbReference>
<dbReference type="PANTHER" id="PTHR11934:SF0">
    <property type="entry name" value="RIBOSE-5-PHOSPHATE ISOMERASE"/>
    <property type="match status" value="1"/>
</dbReference>
<dbReference type="Pfam" id="PF06026">
    <property type="entry name" value="Rib_5-P_isom_A"/>
    <property type="match status" value="1"/>
</dbReference>
<dbReference type="SUPFAM" id="SSF75445">
    <property type="entry name" value="D-ribose-5-phosphate isomerase (RpiA), lid domain"/>
    <property type="match status" value="1"/>
</dbReference>
<dbReference type="SUPFAM" id="SSF100950">
    <property type="entry name" value="NagB/RpiA/CoA transferase-like"/>
    <property type="match status" value="1"/>
</dbReference>
<evidence type="ECO:0000255" key="1">
    <source>
        <dbReference type="HAMAP-Rule" id="MF_00170"/>
    </source>
</evidence>
<protein>
    <recommendedName>
        <fullName evidence="1">Ribose-5-phosphate isomerase A</fullName>
        <ecNumber evidence="1">5.3.1.6</ecNumber>
    </recommendedName>
    <alternativeName>
        <fullName evidence="1">Phosphoriboisomerase A</fullName>
        <shortName evidence="1">PRI</shortName>
    </alternativeName>
</protein>
<name>RPIA_ECOLU</name>
<accession>B7N7F6</accession>
<comment type="function">
    <text evidence="1">Catalyzes the reversible conversion of ribose-5-phosphate to ribulose 5-phosphate.</text>
</comment>
<comment type="catalytic activity">
    <reaction evidence="1">
        <text>aldehydo-D-ribose 5-phosphate = D-ribulose 5-phosphate</text>
        <dbReference type="Rhea" id="RHEA:14657"/>
        <dbReference type="ChEBI" id="CHEBI:58121"/>
        <dbReference type="ChEBI" id="CHEBI:58273"/>
        <dbReference type="EC" id="5.3.1.6"/>
    </reaction>
</comment>
<comment type="pathway">
    <text evidence="1">Carbohydrate degradation; pentose phosphate pathway; D-ribose 5-phosphate from D-ribulose 5-phosphate (non-oxidative stage): step 1/1.</text>
</comment>
<comment type="subunit">
    <text evidence="1">Homodimer.</text>
</comment>
<comment type="similarity">
    <text evidence="1">Belongs to the ribose 5-phosphate isomerase family.</text>
</comment>
<feature type="chain" id="PRO_1000194705" description="Ribose-5-phosphate isomerase A">
    <location>
        <begin position="1"/>
        <end position="219"/>
    </location>
</feature>
<feature type="active site" description="Proton acceptor" evidence="1">
    <location>
        <position position="103"/>
    </location>
</feature>
<feature type="binding site" evidence="1">
    <location>
        <begin position="28"/>
        <end position="31"/>
    </location>
    <ligand>
        <name>substrate</name>
    </ligand>
</feature>
<feature type="binding site" evidence="1">
    <location>
        <begin position="81"/>
        <end position="84"/>
    </location>
    <ligand>
        <name>substrate</name>
    </ligand>
</feature>
<feature type="binding site" evidence="1">
    <location>
        <begin position="94"/>
        <end position="97"/>
    </location>
    <ligand>
        <name>substrate</name>
    </ligand>
</feature>
<feature type="binding site" evidence="1">
    <location>
        <position position="121"/>
    </location>
    <ligand>
        <name>substrate</name>
    </ligand>
</feature>